<proteinExistence type="predicted"/>
<dbReference type="EMBL" id="AB001684">
    <property type="protein sequence ID" value="BAA57934.1"/>
    <property type="molecule type" value="Genomic_DNA"/>
</dbReference>
<dbReference type="PIR" id="T07286">
    <property type="entry name" value="T07286"/>
</dbReference>
<dbReference type="RefSeq" id="NP_045858.1">
    <property type="nucleotide sequence ID" value="NC_001865.1"/>
</dbReference>
<dbReference type="GeneID" id="1457442"/>
<dbReference type="GO" id="GO:0009507">
    <property type="term" value="C:chloroplast"/>
    <property type="evidence" value="ECO:0007669"/>
    <property type="project" value="UniProtKB-SubCell"/>
</dbReference>
<keyword id="KW-0150">Chloroplast</keyword>
<keyword id="KW-0934">Plastid</keyword>
<reference key="1">
    <citation type="journal article" date="1997" name="Proc. Natl. Acad. Sci. U.S.A.">
        <title>Complete nucleotide sequence of the chloroplast genome from the green alga Chlorella vulgaris: the existence of genes possibly involved in chloroplast division.</title>
        <authorList>
            <person name="Wakasugi T."/>
            <person name="Nagai T."/>
            <person name="Kapoor M."/>
            <person name="Sugita M."/>
            <person name="Ito M."/>
            <person name="Ito S."/>
            <person name="Tsudzuki J."/>
            <person name="Nakashima K."/>
            <person name="Tsudzuki T."/>
            <person name="Suzuki Y."/>
            <person name="Hamada A."/>
            <person name="Ohta T."/>
            <person name="Inamura A."/>
            <person name="Yoshinaga K."/>
            <person name="Sugiura M."/>
        </authorList>
    </citation>
    <scope>NUCLEOTIDE SEQUENCE [LARGE SCALE GENOMIC DNA]</scope>
    <source>
        <strain>IAM C-27 / Tamiya</strain>
    </source>
</reference>
<feature type="chain" id="PRO_0000217516" description="Uncharacterized 20.1 kDa protein in psaB-ycf62 intergenic region">
    <location>
        <begin position="1"/>
        <end position="177"/>
    </location>
</feature>
<organism>
    <name type="scientific">Chlorella vulgaris</name>
    <name type="common">Green alga</name>
    <dbReference type="NCBI Taxonomy" id="3077"/>
    <lineage>
        <taxon>Eukaryota</taxon>
        <taxon>Viridiplantae</taxon>
        <taxon>Chlorophyta</taxon>
        <taxon>core chlorophytes</taxon>
        <taxon>Trebouxiophyceae</taxon>
        <taxon>Chlorellales</taxon>
        <taxon>Chlorellaceae</taxon>
        <taxon>Chlorella clade</taxon>
        <taxon>Chlorella</taxon>
    </lineage>
</organism>
<accession>O20162</accession>
<protein>
    <recommendedName>
        <fullName>Uncharacterized 20.1 kDa protein in psaB-ycf62 intergenic region</fullName>
    </recommendedName>
    <alternativeName>
        <fullName>ORF177</fullName>
    </alternativeName>
</protein>
<name>YCX8_CHLVU</name>
<geneLocation type="chloroplast"/>
<sequence>MVTEFRDAWEARYGLVPGACCLKNSVTFSSLESGQGLERNPNQEALADRKNKKCQFKNEYVACHATVFPHFVNPENPKAVEFLKNHPLNIPVNMDMTFGPLKDTPAFCYGGHKLGLCNSLYDSIIYDDTYQGKGEHNLKKFFSEAIATCFLYQNAIKPINYKPKNMKHSVIGVSLYY</sequence>
<comment type="subcellular location">
    <subcellularLocation>
        <location>Plastid</location>
        <location>Chloroplast</location>
    </subcellularLocation>
</comment>